<reference key="1">
    <citation type="journal article" date="2011" name="Proc. Natl. Acad. Sci. U.S.A.">
        <title>Identification of the thiazolyl peptide GE37468 gene cluster from Streptomyces ATCC 55365 and heterologous expression in Streptomyces lividans.</title>
        <authorList>
            <person name="Young T.S."/>
            <person name="Walsh C.T."/>
        </authorList>
    </citation>
    <scope>NUCLEOTIDE SEQUENCE [GENOMIC DNA]</scope>
    <scope>FUNCTION</scope>
    <scope>MASS SPECTROMETRY</scope>
    <scope>METHYLHYDROXYLATION AT ILE-50</scope>
    <scope>MUTAGENESIS OF ILE-50</scope>
    <source>
        <strain>ATCC 55365</strain>
    </source>
</reference>
<reference key="2">
    <citation type="journal article" date="1995" name="J. Antibiot.">
        <title>Antibiotic GE37468 A: a new inhibitor of bacterial protein synthesis. I. Isolation and characterization.</title>
        <authorList>
            <person name="Stella S."/>
            <person name="Montanini N."/>
            <person name="Le Monnier F."/>
            <person name="Ferrari P."/>
            <person name="Colombo L."/>
            <person name="Landini P."/>
            <person name="Ciciliato I."/>
            <person name="Goldstein B.P."/>
            <person name="Selva E."/>
            <person name="Denaro M."/>
        </authorList>
    </citation>
    <scope>CHARACTERIZATION</scope>
    <scope>SUBCELLULAR LOCATION</scope>
    <scope>IDENTIFICATION BY MASS SPECTROMETRY</scope>
    <source>
        <strain>ATCC 55365</strain>
    </source>
</reference>
<reference key="3">
    <citation type="journal article" date="1995" name="J. Antibiot.">
        <title>Antibiotic GE37468 A: a novel inhibitor of bacterial protein synthesis. II. Structure elucidation.</title>
        <authorList>
            <person name="Ferrari P."/>
            <person name="Colombo L."/>
            <person name="Stella S."/>
            <person name="Selva E."/>
            <person name="Zerilli L.F."/>
        </authorList>
    </citation>
    <scope>STRUCTURE BY NMR</scope>
    <scope>MASS SPECTROMETRY</scope>
    <scope>DEHYDRATION AT SER-55 AND SER-56</scope>
    <source>
        <strain>ATCC 55365</strain>
    </source>
</reference>
<comment type="function">
    <text evidence="1">Has bacteriocidal activity against both aerobic and anaerobic Gram-positive bacteria. Inhibits growth of B.subtilis (MIC=0.047 ug/ml) and methicillin-resistant S.aureus (MRSA) (MIC=0.047 ug/ml). Has poor activity against Gram-negative bacteria, with the exception of B.fragilis. Inhibits bacterial protein biosynthesis by acting on elongation factor Tu (EF-Tu). Full antibiotic activity depends on the presence of the modified residue Ile-50.</text>
</comment>
<comment type="subcellular location">
    <subcellularLocation>
        <location evidence="2">Secreted</location>
    </subcellularLocation>
</comment>
<comment type="PTM">
    <text>Maturation of thiazole and oxazole containing antibiotics involves the enzymatic condensation of a Cys, Ser or Thr with the alpha-carbonyl of the preceding amino acid to form a thioether or ether bond, then dehydration to form a double bond with the alpha-amino nitrogen. Thiazoline or oxazoline ring are dehydrogenated to form thiazole or oxazole rings.</text>
</comment>
<comment type="PTM">
    <text>Maturation of pyridinyl containing antibiotics involves the cross-linking of a Ser and a Cys-Ser pair usually separated by 7 or 8 residues along the peptide chain. The Ser residues are dehydrated to didehydroalanines, then bonded between their beta carbons. The alpha carbonyl of the Cys condenses with alpha carbon of the first Ser to form a pyridinyl ring. The ring may be multiply dehydrogenated to form a pyridine ring with loss of the amino nitrogen of the first Ser.</text>
</comment>
<comment type="mass spectrometry" mass="1309.48" method="FAB" evidence="3"/>
<comment type="mass spectrometry" mass="1308.247" method="Electrospray" evidence="1"/>
<comment type="similarity">
    <text evidence="4">Belongs to the thiocillin family.</text>
</comment>
<protein>
    <recommendedName>
        <fullName>Thiocillin GE37468</fullName>
    </recommendedName>
    <alternativeName>
        <fullName>Antibiotic GE37468</fullName>
    </alternativeName>
</protein>
<keyword id="KW-0044">Antibiotic</keyword>
<keyword id="KW-0929">Antimicrobial</keyword>
<keyword id="KW-0078">Bacteriocin</keyword>
<keyword id="KW-0379">Hydroxylation</keyword>
<keyword id="KW-0488">Methylation</keyword>
<keyword id="KW-0964">Secreted</keyword>
<keyword id="KW-0883">Thioether bond</keyword>
<accession>P0C8P9</accession>
<accession>G1ECL0</accession>
<dbReference type="EMBL" id="JN052143">
    <property type="protein sequence ID" value="AEM00614.1"/>
    <property type="molecule type" value="Genomic_DNA"/>
</dbReference>
<dbReference type="GO" id="GO:0005576">
    <property type="term" value="C:extracellular region"/>
    <property type="evidence" value="ECO:0007669"/>
    <property type="project" value="UniProtKB-SubCell"/>
</dbReference>
<dbReference type="GO" id="GO:0030371">
    <property type="term" value="F:translation repressor activity"/>
    <property type="evidence" value="ECO:0000314"/>
    <property type="project" value="UniProtKB"/>
</dbReference>
<dbReference type="GO" id="GO:0050829">
    <property type="term" value="P:defense response to Gram-negative bacterium"/>
    <property type="evidence" value="ECO:0000314"/>
    <property type="project" value="UniProtKB"/>
</dbReference>
<dbReference type="GO" id="GO:0050830">
    <property type="term" value="P:defense response to Gram-positive bacterium"/>
    <property type="evidence" value="ECO:0000314"/>
    <property type="project" value="UniProtKB"/>
</dbReference>
<dbReference type="GO" id="GO:0031640">
    <property type="term" value="P:killing of cells of another organism"/>
    <property type="evidence" value="ECO:0007669"/>
    <property type="project" value="UniProtKB-KW"/>
</dbReference>
<dbReference type="GO" id="GO:0017148">
    <property type="term" value="P:negative regulation of translation"/>
    <property type="evidence" value="ECO:0000314"/>
    <property type="project" value="UniProtKB"/>
</dbReference>
<dbReference type="NCBIfam" id="NF033399">
    <property type="entry name" value="thiazolyl_GetA"/>
    <property type="match status" value="1"/>
</dbReference>
<dbReference type="Pfam" id="PF19409">
    <property type="entry name" value="Thiopep_pre"/>
    <property type="match status" value="1"/>
</dbReference>
<gene>
    <name type="primary">getA</name>
</gene>
<feature type="propeptide" id="PRO_0000414924" description="Removed in mature form">
    <location>
        <begin position="1"/>
        <end position="42"/>
    </location>
</feature>
<feature type="peptide" id="PRO_0000363171" description="Thiocillin GE37468">
    <location>
        <begin position="43"/>
        <end position="56"/>
    </location>
</feature>
<feature type="propeptide" id="PRO_0000414925" description="Removed in mature form">
    <location>
        <position position="57"/>
    </location>
</feature>
<feature type="modified residue" description="5-hydroxy-3-methylproline (Ile)" evidence="1">
    <location>
        <position position="50"/>
    </location>
</feature>
<feature type="modified residue" description="2,3-didehydroalanine (Ser)" evidence="3">
    <location>
        <position position="55"/>
    </location>
</feature>
<feature type="modified residue" description="2,3-didehydroalanine (Ser)" evidence="3">
    <location>
        <position position="56"/>
    </location>
</feature>
<feature type="cross-link" description="Pyridine-2,5-dicarboxylic acid (Ser-Ser) (with C-52)">
    <location>
        <begin position="43"/>
        <end position="53"/>
    </location>
</feature>
<feature type="cross-link" description="Pyridine-2,5-dicarboxylic acid (Ser-Cys) (with S-53)">
    <location>
        <begin position="43"/>
        <end position="52"/>
    </location>
</feature>
<feature type="cross-link" description="5-methyloxazole-4-carboxylic acid (Ser-Thr)">
    <location>
        <begin position="43"/>
        <end position="44"/>
    </location>
</feature>
<feature type="cross-link" description="Thiazole-4-carboxylic acid (Asn-Cys)">
    <location>
        <begin position="45"/>
        <end position="46"/>
    </location>
</feature>
<feature type="cross-link" description="Thiazoline-4-carboxylic acid (Phe-Cys)">
    <location>
        <begin position="47"/>
        <end position="48"/>
    </location>
</feature>
<feature type="cross-link" description="Thiazole-4-carboxylic acid (Ile-Cys)">
    <location>
        <begin position="50"/>
        <end position="51"/>
    </location>
</feature>
<feature type="cross-link" description="Thiazole-4-carboxylic acid (Cys-Cys)">
    <location>
        <begin position="51"/>
        <end position="52"/>
    </location>
</feature>
<feature type="cross-link" description="Thiazole-4-carboxylic acid (Ser-Cys)">
    <location>
        <begin position="53"/>
        <end position="54"/>
    </location>
</feature>
<feature type="mutagenesis site" description="Two-fold decrease in antibiotic activity." evidence="1">
    <original>I</original>
    <variation>A</variation>
    <location>
        <position position="50"/>
    </location>
</feature>
<name>THCL_STRSQ</name>
<evidence type="ECO:0000269" key="1">
    <source>
    </source>
</evidence>
<evidence type="ECO:0000269" key="2">
    <source>
    </source>
</evidence>
<evidence type="ECO:0000269" key="3">
    <source>
    </source>
</evidence>
<evidence type="ECO:0000305" key="4"/>
<sequence length="57" mass="6058">MGNNEEYFIDVNDLSIDVFDVVEQGGAVTALTADHGMPEVGASTNCFCYICCSCSSN</sequence>
<proteinExistence type="evidence at protein level"/>
<organism>
    <name type="scientific">Streptomyces sp</name>
    <dbReference type="NCBI Taxonomy" id="1931"/>
    <lineage>
        <taxon>Bacteria</taxon>
        <taxon>Bacillati</taxon>
        <taxon>Actinomycetota</taxon>
        <taxon>Actinomycetes</taxon>
        <taxon>Kitasatosporales</taxon>
        <taxon>Streptomycetaceae</taxon>
        <taxon>Streptomyces</taxon>
    </lineage>
</organism>